<comment type="function">
    <text evidence="1">Involved in the maturation of [NiFe] hydrogenases. Required for nickel insertion into the metal center of the hydrogenase.</text>
</comment>
<comment type="similarity">
    <text evidence="1">Belongs to the HypA/HybF family.</text>
</comment>
<sequence length="113" mass="12601">MHELSLCESVIETIMDNVRTHHFSQVRRVRLTVGRFAGVETEALRFSFDVVARGTLVEGAELELLEEPGAAWCFDCSETVPLMDRLDPCPRCGGTRLHPTAGTDVMIKDLEVI</sequence>
<protein>
    <recommendedName>
        <fullName evidence="1">Hydrogenase maturation factor HypA</fullName>
    </recommendedName>
</protein>
<gene>
    <name evidence="1" type="primary">hypA</name>
    <name type="ordered locus">Bind_1159</name>
</gene>
<keyword id="KW-0479">Metal-binding</keyword>
<keyword id="KW-0533">Nickel</keyword>
<keyword id="KW-1185">Reference proteome</keyword>
<keyword id="KW-0862">Zinc</keyword>
<evidence type="ECO:0000255" key="1">
    <source>
        <dbReference type="HAMAP-Rule" id="MF_00213"/>
    </source>
</evidence>
<name>HYPA_BEII9</name>
<accession>B2IJ38</accession>
<dbReference type="EMBL" id="CP001016">
    <property type="protein sequence ID" value="ACB94801.1"/>
    <property type="molecule type" value="Genomic_DNA"/>
</dbReference>
<dbReference type="RefSeq" id="WP_012384158.1">
    <property type="nucleotide sequence ID" value="NC_010581.1"/>
</dbReference>
<dbReference type="SMR" id="B2IJ38"/>
<dbReference type="STRING" id="395963.Bind_1159"/>
<dbReference type="KEGG" id="bid:Bind_1159"/>
<dbReference type="eggNOG" id="COG0375">
    <property type="taxonomic scope" value="Bacteria"/>
</dbReference>
<dbReference type="HOGENOM" id="CLU_126929_0_0_5"/>
<dbReference type="OrthoDB" id="288014at2"/>
<dbReference type="Proteomes" id="UP000001695">
    <property type="component" value="Chromosome"/>
</dbReference>
<dbReference type="GO" id="GO:0016151">
    <property type="term" value="F:nickel cation binding"/>
    <property type="evidence" value="ECO:0007669"/>
    <property type="project" value="UniProtKB-UniRule"/>
</dbReference>
<dbReference type="GO" id="GO:0008270">
    <property type="term" value="F:zinc ion binding"/>
    <property type="evidence" value="ECO:0007669"/>
    <property type="project" value="UniProtKB-UniRule"/>
</dbReference>
<dbReference type="GO" id="GO:0051604">
    <property type="term" value="P:protein maturation"/>
    <property type="evidence" value="ECO:0007669"/>
    <property type="project" value="InterPro"/>
</dbReference>
<dbReference type="GO" id="GO:0036211">
    <property type="term" value="P:protein modification process"/>
    <property type="evidence" value="ECO:0007669"/>
    <property type="project" value="UniProtKB-UniRule"/>
</dbReference>
<dbReference type="Gene3D" id="3.30.2320.80">
    <property type="match status" value="1"/>
</dbReference>
<dbReference type="HAMAP" id="MF_00213">
    <property type="entry name" value="HypA_HybF"/>
    <property type="match status" value="1"/>
</dbReference>
<dbReference type="InterPro" id="IPR020538">
    <property type="entry name" value="Hydgase_Ni_incorp_HypA/HybF_CS"/>
</dbReference>
<dbReference type="InterPro" id="IPR000688">
    <property type="entry name" value="HypA/HybF"/>
</dbReference>
<dbReference type="NCBIfam" id="TIGR00100">
    <property type="entry name" value="hypA"/>
    <property type="match status" value="1"/>
</dbReference>
<dbReference type="PANTHER" id="PTHR34535">
    <property type="entry name" value="HYDROGENASE MATURATION FACTOR HYPA"/>
    <property type="match status" value="1"/>
</dbReference>
<dbReference type="PANTHER" id="PTHR34535:SF3">
    <property type="entry name" value="HYDROGENASE MATURATION FACTOR HYPA"/>
    <property type="match status" value="1"/>
</dbReference>
<dbReference type="Pfam" id="PF01155">
    <property type="entry name" value="HypA"/>
    <property type="match status" value="1"/>
</dbReference>
<dbReference type="PIRSF" id="PIRSF004761">
    <property type="entry name" value="Hydrgn_mat_HypA"/>
    <property type="match status" value="1"/>
</dbReference>
<dbReference type="PROSITE" id="PS01249">
    <property type="entry name" value="HYPA"/>
    <property type="match status" value="1"/>
</dbReference>
<proteinExistence type="inferred from homology"/>
<feature type="chain" id="PRO_1000099886" description="Hydrogenase maturation factor HypA">
    <location>
        <begin position="1"/>
        <end position="113"/>
    </location>
</feature>
<feature type="binding site" evidence="1">
    <location>
        <position position="2"/>
    </location>
    <ligand>
        <name>Ni(2+)</name>
        <dbReference type="ChEBI" id="CHEBI:49786"/>
    </ligand>
</feature>
<feature type="binding site" evidence="1">
    <location>
        <position position="73"/>
    </location>
    <ligand>
        <name>Zn(2+)</name>
        <dbReference type="ChEBI" id="CHEBI:29105"/>
    </ligand>
</feature>
<feature type="binding site" evidence="1">
    <location>
        <position position="76"/>
    </location>
    <ligand>
        <name>Zn(2+)</name>
        <dbReference type="ChEBI" id="CHEBI:29105"/>
    </ligand>
</feature>
<feature type="binding site" evidence="1">
    <location>
        <position position="89"/>
    </location>
    <ligand>
        <name>Zn(2+)</name>
        <dbReference type="ChEBI" id="CHEBI:29105"/>
    </ligand>
</feature>
<feature type="binding site" evidence="1">
    <location>
        <position position="92"/>
    </location>
    <ligand>
        <name>Zn(2+)</name>
        <dbReference type="ChEBI" id="CHEBI:29105"/>
    </ligand>
</feature>
<organism>
    <name type="scientific">Beijerinckia indica subsp. indica (strain ATCC 9039 / DSM 1715 / NCIMB 8712)</name>
    <dbReference type="NCBI Taxonomy" id="395963"/>
    <lineage>
        <taxon>Bacteria</taxon>
        <taxon>Pseudomonadati</taxon>
        <taxon>Pseudomonadota</taxon>
        <taxon>Alphaproteobacteria</taxon>
        <taxon>Hyphomicrobiales</taxon>
        <taxon>Beijerinckiaceae</taxon>
        <taxon>Beijerinckia</taxon>
    </lineage>
</organism>
<reference key="1">
    <citation type="journal article" date="2010" name="J. Bacteriol.">
        <title>Complete genome sequence of Beijerinckia indica subsp. indica.</title>
        <authorList>
            <person name="Tamas I."/>
            <person name="Dedysh S.N."/>
            <person name="Liesack W."/>
            <person name="Stott M.B."/>
            <person name="Alam M."/>
            <person name="Murrell J.C."/>
            <person name="Dunfield P.F."/>
        </authorList>
    </citation>
    <scope>NUCLEOTIDE SEQUENCE [LARGE SCALE GENOMIC DNA]</scope>
    <source>
        <strain>ATCC 9039 / DSM 1715 / NCIMB 8712</strain>
    </source>
</reference>